<accession>A8A391</accession>
<name>GRCA_ECOHS</name>
<proteinExistence type="inferred from homology"/>
<feature type="chain" id="PRO_1000083717" description="Autonomous glycyl radical cofactor">
    <location>
        <begin position="1"/>
        <end position="127"/>
    </location>
</feature>
<feature type="domain" description="Glycine radical" evidence="1">
    <location>
        <begin position="5"/>
        <end position="127"/>
    </location>
</feature>
<feature type="modified residue" description="N6-acetyllysine" evidence="1">
    <location>
        <position position="48"/>
    </location>
</feature>
<feature type="modified residue" description="N6-acetyllysine" evidence="1">
    <location>
        <position position="88"/>
    </location>
</feature>
<feature type="modified residue" description="N6-acetyllysine" evidence="1">
    <location>
        <position position="92"/>
    </location>
</feature>
<feature type="modified residue" description="Glycine radical" evidence="1">
    <location>
        <position position="102"/>
    </location>
</feature>
<dbReference type="EMBL" id="CP000802">
    <property type="protein sequence ID" value="ABV06995.1"/>
    <property type="molecule type" value="Genomic_DNA"/>
</dbReference>
<dbReference type="RefSeq" id="WP_000627807.1">
    <property type="nucleotide sequence ID" value="NC_009800.1"/>
</dbReference>
<dbReference type="SMR" id="A8A391"/>
<dbReference type="GeneID" id="93774507"/>
<dbReference type="KEGG" id="ecx:EcHS_A2736"/>
<dbReference type="HOGENOM" id="CLU_133780_0_0_6"/>
<dbReference type="GO" id="GO:0005829">
    <property type="term" value="C:cytosol"/>
    <property type="evidence" value="ECO:0007669"/>
    <property type="project" value="TreeGrafter"/>
</dbReference>
<dbReference type="GO" id="GO:0008861">
    <property type="term" value="F:formate C-acetyltransferase activity"/>
    <property type="evidence" value="ECO:0007669"/>
    <property type="project" value="TreeGrafter"/>
</dbReference>
<dbReference type="FunFam" id="3.20.70.20:FF:000002">
    <property type="entry name" value="Autonomous glycyl radical cofactor"/>
    <property type="match status" value="1"/>
</dbReference>
<dbReference type="Gene3D" id="3.20.70.20">
    <property type="match status" value="1"/>
</dbReference>
<dbReference type="HAMAP" id="MF_00806">
    <property type="entry name" value="GrcA"/>
    <property type="match status" value="1"/>
</dbReference>
<dbReference type="InterPro" id="IPR050244">
    <property type="entry name" value="Auton_GlycylRad_Cofactor"/>
</dbReference>
<dbReference type="InterPro" id="IPR019777">
    <property type="entry name" value="Form_AcTrfase_GR_CS"/>
</dbReference>
<dbReference type="InterPro" id="IPR001150">
    <property type="entry name" value="Gly_radical"/>
</dbReference>
<dbReference type="InterPro" id="IPR011140">
    <property type="entry name" value="Glycyl_radical_cofactor_GrcA"/>
</dbReference>
<dbReference type="NCBIfam" id="TIGR04365">
    <property type="entry name" value="spare_glycyl"/>
    <property type="match status" value="1"/>
</dbReference>
<dbReference type="PANTHER" id="PTHR30191">
    <property type="entry name" value="FORMATE ACETYLTRANSFERASE"/>
    <property type="match status" value="1"/>
</dbReference>
<dbReference type="PANTHER" id="PTHR30191:SF0">
    <property type="entry name" value="FORMATE ACETYLTRANSFERASE 1"/>
    <property type="match status" value="1"/>
</dbReference>
<dbReference type="Pfam" id="PF01228">
    <property type="entry name" value="Gly_radical"/>
    <property type="match status" value="1"/>
</dbReference>
<dbReference type="PIRSF" id="PIRSF000378">
    <property type="entry name" value="Gly_radicl_yfiD"/>
    <property type="match status" value="1"/>
</dbReference>
<dbReference type="SUPFAM" id="SSF51998">
    <property type="entry name" value="PFL-like glycyl radical enzymes"/>
    <property type="match status" value="1"/>
</dbReference>
<dbReference type="PROSITE" id="PS00850">
    <property type="entry name" value="GLY_RADICAL_1"/>
    <property type="match status" value="1"/>
</dbReference>
<dbReference type="PROSITE" id="PS51149">
    <property type="entry name" value="GLY_RADICAL_2"/>
    <property type="match status" value="1"/>
</dbReference>
<keyword id="KW-0007">Acetylation</keyword>
<keyword id="KW-0556">Organic radical</keyword>
<comment type="function">
    <text evidence="1">Acts as a radical domain for damaged PFL and possibly other radical proteins.</text>
</comment>
<gene>
    <name evidence="1" type="primary">grcA</name>
    <name type="ordered locus">EcHS_A2736</name>
</gene>
<evidence type="ECO:0000255" key="1">
    <source>
        <dbReference type="HAMAP-Rule" id="MF_00806"/>
    </source>
</evidence>
<organism>
    <name type="scientific">Escherichia coli O9:H4 (strain HS)</name>
    <dbReference type="NCBI Taxonomy" id="331112"/>
    <lineage>
        <taxon>Bacteria</taxon>
        <taxon>Pseudomonadati</taxon>
        <taxon>Pseudomonadota</taxon>
        <taxon>Gammaproteobacteria</taxon>
        <taxon>Enterobacterales</taxon>
        <taxon>Enterobacteriaceae</taxon>
        <taxon>Escherichia</taxon>
    </lineage>
</organism>
<sequence length="127" mass="14284">MITGIQITKAANDDLLNSFWLLDSEKGEARCIVAKAGYAEDEVVAVSKLGDIEYREVPVEVKPEVRVEGGQHLNVNVLRRETLEDAVKHPEKYPQLTIRVSGYAVRFNSLTPEQQRDVIARTFTESL</sequence>
<protein>
    <recommendedName>
        <fullName evidence="1">Autonomous glycyl radical cofactor</fullName>
    </recommendedName>
</protein>
<reference key="1">
    <citation type="journal article" date="2008" name="J. Bacteriol.">
        <title>The pangenome structure of Escherichia coli: comparative genomic analysis of E. coli commensal and pathogenic isolates.</title>
        <authorList>
            <person name="Rasko D.A."/>
            <person name="Rosovitz M.J."/>
            <person name="Myers G.S.A."/>
            <person name="Mongodin E.F."/>
            <person name="Fricke W.F."/>
            <person name="Gajer P."/>
            <person name="Crabtree J."/>
            <person name="Sebaihia M."/>
            <person name="Thomson N.R."/>
            <person name="Chaudhuri R."/>
            <person name="Henderson I.R."/>
            <person name="Sperandio V."/>
            <person name="Ravel J."/>
        </authorList>
    </citation>
    <scope>NUCLEOTIDE SEQUENCE [LARGE SCALE GENOMIC DNA]</scope>
    <source>
        <strain>HS</strain>
    </source>
</reference>